<name>RHBG_MOUSE</name>
<proteinExistence type="evidence at protein level"/>
<keyword id="KW-0924">Ammonia transport</keyword>
<keyword id="KW-1003">Cell membrane</keyword>
<keyword id="KW-0325">Glycoprotein</keyword>
<keyword id="KW-0472">Membrane</keyword>
<keyword id="KW-1185">Reference proteome</keyword>
<keyword id="KW-0812">Transmembrane</keyword>
<keyword id="KW-1133">Transmembrane helix</keyword>
<keyword id="KW-0813">Transport</keyword>
<organism>
    <name type="scientific">Mus musculus</name>
    <name type="common">Mouse</name>
    <dbReference type="NCBI Taxonomy" id="10090"/>
    <lineage>
        <taxon>Eukaryota</taxon>
        <taxon>Metazoa</taxon>
        <taxon>Chordata</taxon>
        <taxon>Craniata</taxon>
        <taxon>Vertebrata</taxon>
        <taxon>Euteleostomi</taxon>
        <taxon>Mammalia</taxon>
        <taxon>Eutheria</taxon>
        <taxon>Euarchontoglires</taxon>
        <taxon>Glires</taxon>
        <taxon>Rodentia</taxon>
        <taxon>Myomorpha</taxon>
        <taxon>Muroidea</taxon>
        <taxon>Muridae</taxon>
        <taxon>Murinae</taxon>
        <taxon>Mus</taxon>
        <taxon>Mus</taxon>
    </lineage>
</organism>
<gene>
    <name type="primary">Rhbg</name>
</gene>
<protein>
    <recommendedName>
        <fullName>Ammonium transporter Rh type B</fullName>
    </recommendedName>
    <alternativeName>
        <fullName>Rhesus blood group family type B glycoprotein</fullName>
        <shortName>Rh family type B glycoprotein</shortName>
        <shortName>Rh type B glycoprotein</shortName>
    </alternativeName>
</protein>
<feature type="chain" id="PRO_0000283599" description="Ammonium transporter Rh type B">
    <location>
        <begin position="1"/>
        <end position="455"/>
    </location>
</feature>
<feature type="topological domain" description="Cytoplasmic" evidence="3">
    <location>
        <begin position="1"/>
        <end position="10"/>
    </location>
</feature>
<feature type="transmembrane region" description="Helical" evidence="3">
    <location>
        <begin position="11"/>
        <end position="31"/>
    </location>
</feature>
<feature type="topological domain" description="Extracellular" evidence="3">
    <location>
        <begin position="32"/>
        <end position="58"/>
    </location>
</feature>
<feature type="transmembrane region" description="Helical" evidence="3">
    <location>
        <begin position="59"/>
        <end position="79"/>
    </location>
</feature>
<feature type="topological domain" description="Cytoplasmic" evidence="3">
    <location>
        <begin position="80"/>
        <end position="83"/>
    </location>
</feature>
<feature type="transmembrane region" description="Helical" evidence="3">
    <location>
        <begin position="84"/>
        <end position="104"/>
    </location>
</feature>
<feature type="topological domain" description="Extracellular" evidence="3">
    <location>
        <begin position="105"/>
        <end position="121"/>
    </location>
</feature>
<feature type="transmembrane region" description="Helical" evidence="3">
    <location>
        <begin position="122"/>
        <end position="142"/>
    </location>
</feature>
<feature type="topological domain" description="Cytoplasmic" evidence="3">
    <location>
        <begin position="143"/>
        <end position="146"/>
    </location>
</feature>
<feature type="transmembrane region" description="Helical" evidence="3">
    <location>
        <begin position="147"/>
        <end position="167"/>
    </location>
</feature>
<feature type="topological domain" description="Extracellular" evidence="3">
    <location>
        <begin position="168"/>
        <end position="175"/>
    </location>
</feature>
<feature type="transmembrane region" description="Helical" evidence="3">
    <location>
        <begin position="176"/>
        <end position="198"/>
    </location>
</feature>
<feature type="topological domain" description="Cytoplasmic" evidence="3">
    <location>
        <begin position="199"/>
        <end position="216"/>
    </location>
</feature>
<feature type="transmembrane region" description="Helical" evidence="3">
    <location>
        <begin position="217"/>
        <end position="237"/>
    </location>
</feature>
<feature type="topological domain" description="Extracellular" evidence="3">
    <location>
        <begin position="238"/>
        <end position="248"/>
    </location>
</feature>
<feature type="transmembrane region" description="Helical" evidence="3">
    <location>
        <begin position="249"/>
        <end position="269"/>
    </location>
</feature>
<feature type="topological domain" description="Cytoplasmic" evidence="3">
    <location>
        <begin position="270"/>
        <end position="279"/>
    </location>
</feature>
<feature type="transmembrane region" description="Helical" evidence="3">
    <location>
        <begin position="280"/>
        <end position="300"/>
    </location>
</feature>
<feature type="topological domain" description="Extracellular" evidence="3">
    <location>
        <position position="301"/>
    </location>
</feature>
<feature type="transmembrane region" description="Helical" evidence="3">
    <location>
        <begin position="302"/>
        <end position="322"/>
    </location>
</feature>
<feature type="topological domain" description="Cytoplasmic" evidence="3">
    <location>
        <begin position="323"/>
        <end position="343"/>
    </location>
</feature>
<feature type="transmembrane region" description="Helical" evidence="3">
    <location>
        <begin position="344"/>
        <end position="364"/>
    </location>
</feature>
<feature type="topological domain" description="Extracellular" evidence="3">
    <location>
        <begin position="365"/>
        <end position="390"/>
    </location>
</feature>
<feature type="transmembrane region" description="Helical" evidence="3">
    <location>
        <begin position="391"/>
        <end position="411"/>
    </location>
</feature>
<feature type="topological domain" description="Cytoplasmic" evidence="3">
    <location>
        <begin position="412"/>
        <end position="455"/>
    </location>
</feature>
<feature type="region of interest" description="Interaction with ANK3" evidence="1">
    <location>
        <begin position="413"/>
        <end position="421"/>
    </location>
</feature>
<feature type="region of interest" description="Disordered" evidence="4">
    <location>
        <begin position="434"/>
        <end position="455"/>
    </location>
</feature>
<feature type="compositionally biased region" description="Basic and acidic residues" evidence="4">
    <location>
        <begin position="441"/>
        <end position="455"/>
    </location>
</feature>
<feature type="glycosylation site" description="N-linked (GlcNAc...) asparagine" evidence="3">
    <location>
        <position position="46"/>
    </location>
</feature>
<feature type="mutagenesis site" description="Normal plasma membrane localization." evidence="12">
    <original>F</original>
    <variation>L</variation>
    <location>
        <position position="128"/>
    </location>
</feature>
<feature type="mutagenesis site" description="Impairs targeting to plasma membrane resulting in loss of transporter activity." evidence="12">
    <original>H</original>
    <variation>A</variation>
    <variation>L</variation>
    <variation>D</variation>
    <location>
        <position position="183"/>
    </location>
</feature>
<feature type="mutagenesis site" description="Normal plasma membrane localization. Loss of transporter activity." evidence="12">
    <original>W</original>
    <variation>A</variation>
    <variation>F</variation>
    <variation>L</variation>
    <location>
        <position position="230"/>
    </location>
</feature>
<feature type="mutagenesis site" description="Decreases expression and/or localization at the plasma membrane." evidence="12">
    <original>H</original>
    <variation>L</variation>
    <location>
        <position position="342"/>
    </location>
</feature>
<feature type="sequence conflict" description="In Ref. 1; AAF19371 and 4; AAH29236." evidence="13" ref="1 4">
    <original>W</original>
    <variation>R</variation>
    <location>
        <position position="195"/>
    </location>
</feature>
<evidence type="ECO:0000250" key="1"/>
<evidence type="ECO:0000250" key="2">
    <source>
        <dbReference type="UniProtKB" id="Q9H310"/>
    </source>
</evidence>
<evidence type="ECO:0000255" key="3"/>
<evidence type="ECO:0000256" key="4">
    <source>
        <dbReference type="SAM" id="MobiDB-lite"/>
    </source>
</evidence>
<evidence type="ECO:0000269" key="5">
    <source>
    </source>
</evidence>
<evidence type="ECO:0000269" key="6">
    <source>
    </source>
</evidence>
<evidence type="ECO:0000269" key="7">
    <source>
    </source>
</evidence>
<evidence type="ECO:0000269" key="8">
    <source>
    </source>
</evidence>
<evidence type="ECO:0000269" key="9">
    <source>
    </source>
</evidence>
<evidence type="ECO:0000269" key="10">
    <source>
    </source>
</evidence>
<evidence type="ECO:0000269" key="11">
    <source>
    </source>
</evidence>
<evidence type="ECO:0000269" key="12">
    <source>
    </source>
</evidence>
<evidence type="ECO:0000305" key="13"/>
<evidence type="ECO:0000305" key="14">
    <source>
    </source>
</evidence>
<evidence type="ECO:0000305" key="15">
    <source>
    </source>
</evidence>
<evidence type="ECO:0000305" key="16">
    <source>
    </source>
</evidence>
<evidence type="ECO:0000305" key="17">
    <source>
    </source>
</evidence>
<accession>Q8BUX5</accession>
<accession>Q9QXP1</accession>
<sequence>MARVPRHRRLVLPLLCLLFQGATALLFAIFVRYNHETDAALWHWGNHSNVDNEFYFRYPSFQDVHVMVFVGFGFLMVFLQRYGFSSVGFTFLVASLTLQWATLLQGFLHSFHGGHIHVGVESLINADFCAGAVLISFGAVLGKTGPAQLLLMALLEAVLFSVNEFILLSLLGVRDAGGSMTIHTFGAYFGLFLSWVLYRSQLEKSRHRQSSVYNSDLFAMIGTIFLWVFWPSFNSAPTALGDGQHRTVVNTYYSLTASTLSTFALSALVSGDGRLDMVHVQNAALAGGVVVGTSSEMMLTPFGALAAGFLAGTVSTLGYKFFTPILESRFKLQDTCGVHNLHGMPGVLGAILGVVVAALATHEAYGDGLQSVFPLIAKGQRSATSQAVYQLFGMFVTLVFASVGGSLGGLLLRLPFLDSPPDSQCFEDQVYWEVPGEQETETQRPLRGGESDTRA</sequence>
<dbReference type="EMBL" id="AF193808">
    <property type="protein sequence ID" value="AAF19371.1"/>
    <property type="molecule type" value="mRNA"/>
</dbReference>
<dbReference type="EMBL" id="AY254685">
    <property type="protein sequence ID" value="AAP81167.1"/>
    <property type="molecule type" value="mRNA"/>
</dbReference>
<dbReference type="EMBL" id="AK081882">
    <property type="protein sequence ID" value="BAC38359.1"/>
    <property type="molecule type" value="mRNA"/>
</dbReference>
<dbReference type="EMBL" id="BC029236">
    <property type="protein sequence ID" value="AAH29236.1"/>
    <property type="molecule type" value="mRNA"/>
</dbReference>
<dbReference type="CCDS" id="CCDS17466.1"/>
<dbReference type="RefSeq" id="NP_067350.2">
    <property type="nucleotide sequence ID" value="NM_021375.3"/>
</dbReference>
<dbReference type="SMR" id="Q8BUX5"/>
<dbReference type="FunCoup" id="Q8BUX5">
    <property type="interactions" value="48"/>
</dbReference>
<dbReference type="STRING" id="10090.ENSMUSP00000130767"/>
<dbReference type="GlyCosmos" id="Q8BUX5">
    <property type="glycosylation" value="1 site, No reported glycans"/>
</dbReference>
<dbReference type="GlyGen" id="Q8BUX5">
    <property type="glycosylation" value="1 site"/>
</dbReference>
<dbReference type="iPTMnet" id="Q8BUX5"/>
<dbReference type="PhosphoSitePlus" id="Q8BUX5"/>
<dbReference type="SwissPalm" id="Q8BUX5"/>
<dbReference type="jPOST" id="Q8BUX5"/>
<dbReference type="PaxDb" id="10090-ENSMUSP00000130767"/>
<dbReference type="DNASU" id="58176"/>
<dbReference type="Ensembl" id="ENSMUST00000171887.4">
    <property type="protein sequence ID" value="ENSMUSP00000130767.2"/>
    <property type="gene ID" value="ENSMUSG00000104445.2"/>
</dbReference>
<dbReference type="GeneID" id="58176"/>
<dbReference type="KEGG" id="mmu:58176"/>
<dbReference type="UCSC" id="uc008pui.1">
    <property type="organism name" value="mouse"/>
</dbReference>
<dbReference type="AGR" id="MGI:1927379"/>
<dbReference type="CTD" id="57127"/>
<dbReference type="MGI" id="MGI:1927379">
    <property type="gene designation" value="Rhbg"/>
</dbReference>
<dbReference type="VEuPathDB" id="HostDB:ENSMUSG00000104445"/>
<dbReference type="eggNOG" id="KOG3796">
    <property type="taxonomic scope" value="Eukaryota"/>
</dbReference>
<dbReference type="GeneTree" id="ENSGT00950000182844"/>
<dbReference type="HOGENOM" id="CLU_021386_0_0_1"/>
<dbReference type="InParanoid" id="Q8BUX5"/>
<dbReference type="OMA" id="DNIYWEV"/>
<dbReference type="OrthoDB" id="534912at2759"/>
<dbReference type="PhylomeDB" id="Q8BUX5"/>
<dbReference type="TreeFam" id="TF314450"/>
<dbReference type="Reactome" id="R-MMU-444411">
    <property type="pathway name" value="Rhesus glycoproteins mediate ammonium transport"/>
</dbReference>
<dbReference type="BioGRID-ORCS" id="58176">
    <property type="hits" value="2 hits in 77 CRISPR screens"/>
</dbReference>
<dbReference type="ChiTaRS" id="Rhbg">
    <property type="organism name" value="mouse"/>
</dbReference>
<dbReference type="PRO" id="PR:Q8BUX5"/>
<dbReference type="Proteomes" id="UP000000589">
    <property type="component" value="Chromosome 3"/>
</dbReference>
<dbReference type="RNAct" id="Q8BUX5">
    <property type="molecule type" value="protein"/>
</dbReference>
<dbReference type="Bgee" id="ENSMUSG00000104445">
    <property type="expression patterns" value="Expressed in right kidney and 47 other cell types or tissues"/>
</dbReference>
<dbReference type="GO" id="GO:0016323">
    <property type="term" value="C:basolateral plasma membrane"/>
    <property type="evidence" value="ECO:0000314"/>
    <property type="project" value="UniProtKB"/>
</dbReference>
<dbReference type="GO" id="GO:0016020">
    <property type="term" value="C:membrane"/>
    <property type="evidence" value="ECO:0000314"/>
    <property type="project" value="UniProtKB"/>
</dbReference>
<dbReference type="GO" id="GO:0005886">
    <property type="term" value="C:plasma membrane"/>
    <property type="evidence" value="ECO:0000250"/>
    <property type="project" value="UniProtKB"/>
</dbReference>
<dbReference type="GO" id="GO:0014731">
    <property type="term" value="C:spectrin-associated cytoskeleton"/>
    <property type="evidence" value="ECO:0000250"/>
    <property type="project" value="UniProtKB"/>
</dbReference>
<dbReference type="GO" id="GO:0008519">
    <property type="term" value="F:ammonium channel activity"/>
    <property type="evidence" value="ECO:0000314"/>
    <property type="project" value="UniProtKB"/>
</dbReference>
<dbReference type="GO" id="GO:0030506">
    <property type="term" value="F:ankyrin binding"/>
    <property type="evidence" value="ECO:0007669"/>
    <property type="project" value="Ensembl"/>
</dbReference>
<dbReference type="GO" id="GO:0035379">
    <property type="term" value="F:carbon dioxide transmembrane transporter activity"/>
    <property type="evidence" value="ECO:0000250"/>
    <property type="project" value="UniProtKB"/>
</dbReference>
<dbReference type="GO" id="GO:0072488">
    <property type="term" value="P:ammonium transmembrane transport"/>
    <property type="evidence" value="ECO:0000314"/>
    <property type="project" value="UniProtKB"/>
</dbReference>
<dbReference type="GO" id="GO:0070634">
    <property type="term" value="P:transepithelial ammonium transport"/>
    <property type="evidence" value="ECO:0007669"/>
    <property type="project" value="Ensembl"/>
</dbReference>
<dbReference type="FunFam" id="1.10.3430.10:FF:000001">
    <property type="entry name" value="Ammonium transporter Rh type C"/>
    <property type="match status" value="1"/>
</dbReference>
<dbReference type="Gene3D" id="1.10.3430.10">
    <property type="entry name" value="Ammonium transporter AmtB like domains"/>
    <property type="match status" value="1"/>
</dbReference>
<dbReference type="InterPro" id="IPR029020">
    <property type="entry name" value="Ammonium/urea_transptr"/>
</dbReference>
<dbReference type="InterPro" id="IPR024041">
    <property type="entry name" value="NH4_transpt_AmtB-like_dom"/>
</dbReference>
<dbReference type="InterPro" id="IPR002229">
    <property type="entry name" value="RhesusRHD"/>
</dbReference>
<dbReference type="PANTHER" id="PTHR11730">
    <property type="entry name" value="AMMONIUM TRANSPORTER"/>
    <property type="match status" value="1"/>
</dbReference>
<dbReference type="PANTHER" id="PTHR11730:SF42">
    <property type="entry name" value="AMMONIUM TRANSPORTER RH TYPE B"/>
    <property type="match status" value="1"/>
</dbReference>
<dbReference type="Pfam" id="PF00909">
    <property type="entry name" value="Ammonium_transp"/>
    <property type="match status" value="1"/>
</dbReference>
<dbReference type="PRINTS" id="PR00342">
    <property type="entry name" value="RHESUSRHD"/>
</dbReference>
<dbReference type="SUPFAM" id="SSF111352">
    <property type="entry name" value="Ammonium transporter"/>
    <property type="match status" value="1"/>
</dbReference>
<reference key="1">
    <citation type="journal article" date="2001" name="J. Biol. Chem.">
        <title>Rh type B glycoprotein is a new member of the Rh superfamily and a putative ammonia transporter in mammals.</title>
        <authorList>
            <person name="Liu Z."/>
            <person name="Peng J."/>
            <person name="Mo R."/>
            <person name="Hui C.-C."/>
            <person name="Huang C.-H."/>
        </authorList>
    </citation>
    <scope>NUCLEOTIDE SEQUENCE [MRNA]</scope>
    <scope>DEVELOPMENTAL STAGE</scope>
    <scope>TISSUE SPECIFICITY</scope>
    <scope>GLYCOSYLATION</scope>
    <source>
        <tissue>Liver</tissue>
    </source>
</reference>
<reference key="2">
    <citation type="journal article" date="2005" name="Am. J. Physiol.">
        <title>Characteristics of renal Rhbg as an NH4(+) transporter.</title>
        <authorList>
            <person name="Nakhoul N.L."/>
            <person name="Dejong H."/>
            <person name="Abdulnour-Nakhoul S.M."/>
            <person name="Boulpaep E.L."/>
            <person name="Hering-Smith K."/>
            <person name="Hamm L.L."/>
        </authorList>
    </citation>
    <scope>NUCLEOTIDE SEQUENCE [MRNA]</scope>
    <scope>FUNCTION</scope>
    <scope>TRANSPORTER ACTIVITY</scope>
    <source>
        <strain>C3H/HeJ</strain>
        <tissue>Kidney cortex</tissue>
    </source>
</reference>
<reference key="3">
    <citation type="journal article" date="2005" name="Science">
        <title>The transcriptional landscape of the mammalian genome.</title>
        <authorList>
            <person name="Carninci P."/>
            <person name="Kasukawa T."/>
            <person name="Katayama S."/>
            <person name="Gough J."/>
            <person name="Frith M.C."/>
            <person name="Maeda N."/>
            <person name="Oyama R."/>
            <person name="Ravasi T."/>
            <person name="Lenhard B."/>
            <person name="Wells C."/>
            <person name="Kodzius R."/>
            <person name="Shimokawa K."/>
            <person name="Bajic V.B."/>
            <person name="Brenner S.E."/>
            <person name="Batalov S."/>
            <person name="Forrest A.R."/>
            <person name="Zavolan M."/>
            <person name="Davis M.J."/>
            <person name="Wilming L.G."/>
            <person name="Aidinis V."/>
            <person name="Allen J.E."/>
            <person name="Ambesi-Impiombato A."/>
            <person name="Apweiler R."/>
            <person name="Aturaliya R.N."/>
            <person name="Bailey T.L."/>
            <person name="Bansal M."/>
            <person name="Baxter L."/>
            <person name="Beisel K.W."/>
            <person name="Bersano T."/>
            <person name="Bono H."/>
            <person name="Chalk A.M."/>
            <person name="Chiu K.P."/>
            <person name="Choudhary V."/>
            <person name="Christoffels A."/>
            <person name="Clutterbuck D.R."/>
            <person name="Crowe M.L."/>
            <person name="Dalla E."/>
            <person name="Dalrymple B.P."/>
            <person name="de Bono B."/>
            <person name="Della Gatta G."/>
            <person name="di Bernardo D."/>
            <person name="Down T."/>
            <person name="Engstrom P."/>
            <person name="Fagiolini M."/>
            <person name="Faulkner G."/>
            <person name="Fletcher C.F."/>
            <person name="Fukushima T."/>
            <person name="Furuno M."/>
            <person name="Futaki S."/>
            <person name="Gariboldi M."/>
            <person name="Georgii-Hemming P."/>
            <person name="Gingeras T.R."/>
            <person name="Gojobori T."/>
            <person name="Green R.E."/>
            <person name="Gustincich S."/>
            <person name="Harbers M."/>
            <person name="Hayashi Y."/>
            <person name="Hensch T.K."/>
            <person name="Hirokawa N."/>
            <person name="Hill D."/>
            <person name="Huminiecki L."/>
            <person name="Iacono M."/>
            <person name="Ikeo K."/>
            <person name="Iwama A."/>
            <person name="Ishikawa T."/>
            <person name="Jakt M."/>
            <person name="Kanapin A."/>
            <person name="Katoh M."/>
            <person name="Kawasawa Y."/>
            <person name="Kelso J."/>
            <person name="Kitamura H."/>
            <person name="Kitano H."/>
            <person name="Kollias G."/>
            <person name="Krishnan S.P."/>
            <person name="Kruger A."/>
            <person name="Kummerfeld S.K."/>
            <person name="Kurochkin I.V."/>
            <person name="Lareau L.F."/>
            <person name="Lazarevic D."/>
            <person name="Lipovich L."/>
            <person name="Liu J."/>
            <person name="Liuni S."/>
            <person name="McWilliam S."/>
            <person name="Madan Babu M."/>
            <person name="Madera M."/>
            <person name="Marchionni L."/>
            <person name="Matsuda H."/>
            <person name="Matsuzawa S."/>
            <person name="Miki H."/>
            <person name="Mignone F."/>
            <person name="Miyake S."/>
            <person name="Morris K."/>
            <person name="Mottagui-Tabar S."/>
            <person name="Mulder N."/>
            <person name="Nakano N."/>
            <person name="Nakauchi H."/>
            <person name="Ng P."/>
            <person name="Nilsson R."/>
            <person name="Nishiguchi S."/>
            <person name="Nishikawa S."/>
            <person name="Nori F."/>
            <person name="Ohara O."/>
            <person name="Okazaki Y."/>
            <person name="Orlando V."/>
            <person name="Pang K.C."/>
            <person name="Pavan W.J."/>
            <person name="Pavesi G."/>
            <person name="Pesole G."/>
            <person name="Petrovsky N."/>
            <person name="Piazza S."/>
            <person name="Reed J."/>
            <person name="Reid J.F."/>
            <person name="Ring B.Z."/>
            <person name="Ringwald M."/>
            <person name="Rost B."/>
            <person name="Ruan Y."/>
            <person name="Salzberg S.L."/>
            <person name="Sandelin A."/>
            <person name="Schneider C."/>
            <person name="Schoenbach C."/>
            <person name="Sekiguchi K."/>
            <person name="Semple C.A."/>
            <person name="Seno S."/>
            <person name="Sessa L."/>
            <person name="Sheng Y."/>
            <person name="Shibata Y."/>
            <person name="Shimada H."/>
            <person name="Shimada K."/>
            <person name="Silva D."/>
            <person name="Sinclair B."/>
            <person name="Sperling S."/>
            <person name="Stupka E."/>
            <person name="Sugiura K."/>
            <person name="Sultana R."/>
            <person name="Takenaka Y."/>
            <person name="Taki K."/>
            <person name="Tammoja K."/>
            <person name="Tan S.L."/>
            <person name="Tang S."/>
            <person name="Taylor M.S."/>
            <person name="Tegner J."/>
            <person name="Teichmann S.A."/>
            <person name="Ueda H.R."/>
            <person name="van Nimwegen E."/>
            <person name="Verardo R."/>
            <person name="Wei C.L."/>
            <person name="Yagi K."/>
            <person name="Yamanishi H."/>
            <person name="Zabarovsky E."/>
            <person name="Zhu S."/>
            <person name="Zimmer A."/>
            <person name="Hide W."/>
            <person name="Bult C."/>
            <person name="Grimmond S.M."/>
            <person name="Teasdale R.D."/>
            <person name="Liu E.T."/>
            <person name="Brusic V."/>
            <person name="Quackenbush J."/>
            <person name="Wahlestedt C."/>
            <person name="Mattick J.S."/>
            <person name="Hume D.A."/>
            <person name="Kai C."/>
            <person name="Sasaki D."/>
            <person name="Tomaru Y."/>
            <person name="Fukuda S."/>
            <person name="Kanamori-Katayama M."/>
            <person name="Suzuki M."/>
            <person name="Aoki J."/>
            <person name="Arakawa T."/>
            <person name="Iida J."/>
            <person name="Imamura K."/>
            <person name="Itoh M."/>
            <person name="Kato T."/>
            <person name="Kawaji H."/>
            <person name="Kawagashira N."/>
            <person name="Kawashima T."/>
            <person name="Kojima M."/>
            <person name="Kondo S."/>
            <person name="Konno H."/>
            <person name="Nakano K."/>
            <person name="Ninomiya N."/>
            <person name="Nishio T."/>
            <person name="Okada M."/>
            <person name="Plessy C."/>
            <person name="Shibata K."/>
            <person name="Shiraki T."/>
            <person name="Suzuki S."/>
            <person name="Tagami M."/>
            <person name="Waki K."/>
            <person name="Watahiki A."/>
            <person name="Okamura-Oho Y."/>
            <person name="Suzuki H."/>
            <person name="Kawai J."/>
            <person name="Hayashizaki Y."/>
        </authorList>
    </citation>
    <scope>NUCLEOTIDE SEQUENCE [LARGE SCALE MRNA]</scope>
    <source>
        <strain>C57BL/6J</strain>
        <tissue>Head</tissue>
    </source>
</reference>
<reference key="4">
    <citation type="journal article" date="2004" name="Genome Res.">
        <title>The status, quality, and expansion of the NIH full-length cDNA project: the Mammalian Gene Collection (MGC).</title>
        <authorList>
            <consortium name="The MGC Project Team"/>
        </authorList>
    </citation>
    <scope>NUCLEOTIDE SEQUENCE [LARGE SCALE MRNA]</scope>
    <source>
        <strain>FVB/N</strain>
        <tissue>Colon</tissue>
    </source>
</reference>
<reference key="5">
    <citation type="journal article" date="2003" name="Am. J. Physiol.">
        <title>Localization of the ammonium transporter proteins RhBG and RhCG in mouse kidney.</title>
        <authorList>
            <person name="Verlander J.W."/>
            <person name="Miller R.T."/>
            <person name="Frank A.E."/>
            <person name="Royaux I.E."/>
            <person name="Kim Y.-H."/>
            <person name="Weiner I.D."/>
        </authorList>
    </citation>
    <scope>SUBCELLULAR LOCATION</scope>
    <scope>TISSUE SPECIFICITY</scope>
</reference>
<reference key="6">
    <citation type="journal article" date="2003" name="Gastroenterology">
        <title>Localization of the ammonium transporters, Rh B glycoprotein and Rh C glycoprotein, in the mouse liver.</title>
        <authorList>
            <person name="Weiner I.D."/>
            <person name="Miller R.T."/>
            <person name="Verlander J.W."/>
        </authorList>
    </citation>
    <scope>SUBCELLULAR LOCATION</scope>
    <scope>TISSUE SPECIFICITY</scope>
</reference>
<reference key="7">
    <citation type="journal article" date="2005" name="Am. J. Physiol.">
        <title>Expression of the ammonia transporter proteins Rh B glycoprotein and Rh C glycoprotein in the intestinal tract.</title>
        <authorList>
            <person name="Handlogten M.E."/>
            <person name="Hong S.-P."/>
            <person name="Zhang L."/>
            <person name="Vander A.W."/>
            <person name="Steinbaum M.L."/>
            <person name="Campbell-Thompson M."/>
            <person name="Weiner I.D."/>
        </authorList>
    </citation>
    <scope>SUBCELLULAR LOCATION</scope>
    <scope>TISSUE SPECIFICITY</scope>
</reference>
<reference key="8">
    <citation type="journal article" date="2006" name="Am. J. Physiol.">
        <title>Characterization of ammonia transport by the kidney Rh glycoproteins RhBG and RhCG.</title>
        <authorList>
            <person name="Mak D.-O."/>
            <person name="Dang B."/>
            <person name="Weiner I.D."/>
            <person name="Foskett J.K."/>
            <person name="Westhoff C.M."/>
        </authorList>
    </citation>
    <scope>FUNCTION</scope>
    <scope>TRANSPORTER ACTIVITY</scope>
    <scope>BIOPHYSICOCHEMICAL PROPERTIES</scope>
</reference>
<reference key="9">
    <citation type="journal article" date="2010" name="Am. J. Physiol.">
        <title>Substrate specificity of Rhbg: ammonium and methyl ammonium transport.</title>
        <authorList>
            <person name="Nakhoul N.L."/>
            <person name="Abdulnour-Nakhoul S.M."/>
            <person name="Boulpaep E.L."/>
            <person name="Rabon E."/>
            <person name="Schmidt E."/>
            <person name="Hamm L.L."/>
        </authorList>
    </citation>
    <scope>FUNCTION</scope>
    <scope>TRANSPORTER ACTIVITY</scope>
    <scope>BIOPHYSICOCHEMICAL PROPERTIES</scope>
    <scope>ACTIVITY REGULATION</scope>
</reference>
<reference key="10">
    <citation type="journal article" date="2016" name="Am. J. Physiol.">
        <title>Structural determinants of NH3 and NH4+ transport by mouse Rhbg, a renal Rh glycoprotein.</title>
        <authorList>
            <person name="Abdulnour-Nakhoul S."/>
            <person name="Le T."/>
            <person name="Rabon E."/>
            <person name="Hamm L.L."/>
            <person name="Nakhoul N.L."/>
        </authorList>
    </citation>
    <scope>FUNCTION</scope>
    <scope>TRANSPORTER ACTIVITY</scope>
    <scope>SUBCELLULAR LOCATION</scope>
    <scope>MUTAGENESIS OF PHE-128; HIS-183; TRP-230 AND HIS-342</scope>
</reference>
<comment type="function">
    <text evidence="2 8 10 11 12">Ammonium transporter involved in the maintenance of acid-base homeostasis. Transports ammonium and its related derivative methylammonium across the basolateral plasma membrane of epithelial cells likely contributing to renal transepithelial ammonia transport and ammonia metabolism. May transport either NH4(+) or NH3 ammonia species predominantly mediating an electrogenic NH4(+) transport (By similarity) (PubMed:15353405, PubMed:16131648, PubMed:20592240, PubMed:27681563). May act as a CO2 channel providing for renal acid secretion (By similarity).</text>
</comment>
<comment type="catalytic activity">
    <reaction evidence="8 11 12">
        <text>NH4(+)(in) = NH4(+)(out)</text>
        <dbReference type="Rhea" id="RHEA:28747"/>
        <dbReference type="ChEBI" id="CHEBI:28938"/>
    </reaction>
    <physiologicalReaction direction="left-to-right" evidence="2">
        <dbReference type="Rhea" id="RHEA:28748"/>
    </physiologicalReaction>
    <physiologicalReaction direction="right-to-left" evidence="14 16 17">
        <dbReference type="Rhea" id="RHEA:28749"/>
    </physiologicalReaction>
</comment>
<comment type="catalytic activity">
    <reaction evidence="8 10 11 12">
        <text>methylamine(out) = methylamine(in)</text>
        <dbReference type="Rhea" id="RHEA:74391"/>
        <dbReference type="ChEBI" id="CHEBI:59338"/>
    </reaction>
    <physiologicalReaction direction="left-to-right" evidence="14 15 16 17">
        <dbReference type="Rhea" id="RHEA:74392"/>
    </physiologicalReaction>
</comment>
<comment type="catalytic activity">
    <reaction evidence="2">
        <text>CO2(out) = CO2(in)</text>
        <dbReference type="Rhea" id="RHEA:74891"/>
        <dbReference type="ChEBI" id="CHEBI:16526"/>
    </reaction>
    <physiologicalReaction direction="left-to-right" evidence="2">
        <dbReference type="Rhea" id="RHEA:74892"/>
    </physiologicalReaction>
</comment>
<comment type="activity regulation">
    <text evidence="11">Inhibited by amiloride.</text>
</comment>
<comment type="biophysicochemical properties">
    <kinetics>
        <KM evidence="10">2.5 mM for methylamine</KM>
        <KM evidence="11">2 mM for methylamine</KM>
    </kinetics>
</comment>
<comment type="subunit">
    <text evidence="1">Interacts (via C-terminus) with ANK2 and ANK3; required for targeting to the basolateral membrane.</text>
</comment>
<comment type="subcellular location">
    <subcellularLocation>
        <location evidence="12">Cell membrane</location>
        <topology evidence="3">Multi-pass membrane protein</topology>
    </subcellularLocation>
    <subcellularLocation>
        <location evidence="2">Basolateral cell membrane</location>
        <topology evidence="3">Multi-pass membrane protein</topology>
    </subcellularLocation>
</comment>
<comment type="tissue specificity">
    <text evidence="5 6 7 9">Expressed in kidney by connecting segments and collecting tubules. Also expressed in liver by perivenous hepatocytes. Expressed in the forestomach and the fundus of the stomach. Expressed in duodenum, jejunum, ileum and colon at the level of villous (at protein level). Specifically expressed in kidney where it is restricted to the epithelial linings of the convoluted tubules and the loop of Henle. Also detected in ovary. Expressed by hepatocytes and dermal hair follicles and papillae.</text>
</comment>
<comment type="developmental stage">
    <text evidence="5">Detected in embryos at 15 dpc and 17 dpc. Expressed in kidney, skin and liver of 16.5 dpc embryos.</text>
</comment>
<comment type="PTM">
    <text evidence="5">N-glycosylated.</text>
</comment>
<comment type="similarity">
    <text evidence="13">Belongs to the ammonium transporter (TC 2.A.49) family. Rh subfamily.</text>
</comment>